<keyword id="KW-0066">ATP synthesis</keyword>
<keyword id="KW-0997">Cell inner membrane</keyword>
<keyword id="KW-1003">Cell membrane</keyword>
<keyword id="KW-0139">CF(1)</keyword>
<keyword id="KW-0375">Hydrogen ion transport</keyword>
<keyword id="KW-0406">Ion transport</keyword>
<keyword id="KW-0472">Membrane</keyword>
<keyword id="KW-1185">Reference proteome</keyword>
<keyword id="KW-0813">Transport</keyword>
<comment type="function">
    <text evidence="1">Produces ATP from ADP in the presence of a proton gradient across the membrane. The gamma chain is believed to be important in regulating ATPase activity and the flow of protons through the CF(0) complex.</text>
</comment>
<comment type="subunit">
    <text evidence="1">F-type ATPases have 2 components, CF(1) - the catalytic core - and CF(0) - the membrane proton channel. CF(1) has five subunits: alpha(3), beta(3), gamma(1), delta(1), epsilon(1). CF(0) has three main subunits: a, b and c.</text>
</comment>
<comment type="subcellular location">
    <subcellularLocation>
        <location evidence="1">Cell inner membrane</location>
        <topology evidence="1">Peripheral membrane protein</topology>
    </subcellularLocation>
</comment>
<comment type="similarity">
    <text evidence="1">Belongs to the ATPase gamma chain family.</text>
</comment>
<organism>
    <name type="scientific">Chlorobium phaeobacteroides (strain DSM 266 / SMG 266 / 2430)</name>
    <dbReference type="NCBI Taxonomy" id="290317"/>
    <lineage>
        <taxon>Bacteria</taxon>
        <taxon>Pseudomonadati</taxon>
        <taxon>Chlorobiota</taxon>
        <taxon>Chlorobiia</taxon>
        <taxon>Chlorobiales</taxon>
        <taxon>Chlorobiaceae</taxon>
        <taxon>Chlorobium/Pelodictyon group</taxon>
        <taxon>Chlorobium</taxon>
    </lineage>
</organism>
<accession>A1BJF4</accession>
<proteinExistence type="inferred from homology"/>
<sequence length="291" mass="32175">MPTLKDIRVRIKGVKSTQQVTKAMKMVAAAKLRRAQERAIMARPYARKLKEMLGSLSDKVDTSLNPLLSNRSEVNKVVVILITADRGLCGAFNTNIVKLAYKLIHEDYAAQHSKNGVSLICAGSRGFDFFRKRGYNIIKGYPGVFQRLDFSFAKEIAETVSGMYLRGEADRVVVVYNEFKSVLAPVLKFETLLPITPEASGKDGGSDYIYEPSPESIIDVLVPKHLNTQVWRVMLESNAAEQAARMSAMDSATENAKELLRTLNISYNRARQAAITKELSEIVGGADALKG</sequence>
<dbReference type="EMBL" id="CP000492">
    <property type="protein sequence ID" value="ABL66531.1"/>
    <property type="molecule type" value="Genomic_DNA"/>
</dbReference>
<dbReference type="RefSeq" id="WP_011746308.1">
    <property type="nucleotide sequence ID" value="NC_008639.1"/>
</dbReference>
<dbReference type="SMR" id="A1BJF4"/>
<dbReference type="STRING" id="290317.Cpha266_2543"/>
<dbReference type="KEGG" id="cph:Cpha266_2543"/>
<dbReference type="eggNOG" id="COG0224">
    <property type="taxonomic scope" value="Bacteria"/>
</dbReference>
<dbReference type="HOGENOM" id="CLU_050669_0_1_10"/>
<dbReference type="OrthoDB" id="9812769at2"/>
<dbReference type="Proteomes" id="UP000008701">
    <property type="component" value="Chromosome"/>
</dbReference>
<dbReference type="GO" id="GO:0005886">
    <property type="term" value="C:plasma membrane"/>
    <property type="evidence" value="ECO:0007669"/>
    <property type="project" value="UniProtKB-SubCell"/>
</dbReference>
<dbReference type="GO" id="GO:0045259">
    <property type="term" value="C:proton-transporting ATP synthase complex"/>
    <property type="evidence" value="ECO:0007669"/>
    <property type="project" value="UniProtKB-KW"/>
</dbReference>
<dbReference type="GO" id="GO:0005524">
    <property type="term" value="F:ATP binding"/>
    <property type="evidence" value="ECO:0007669"/>
    <property type="project" value="UniProtKB-UniRule"/>
</dbReference>
<dbReference type="GO" id="GO:0046933">
    <property type="term" value="F:proton-transporting ATP synthase activity, rotational mechanism"/>
    <property type="evidence" value="ECO:0007669"/>
    <property type="project" value="UniProtKB-UniRule"/>
</dbReference>
<dbReference type="GO" id="GO:0042777">
    <property type="term" value="P:proton motive force-driven plasma membrane ATP synthesis"/>
    <property type="evidence" value="ECO:0007669"/>
    <property type="project" value="UniProtKB-UniRule"/>
</dbReference>
<dbReference type="CDD" id="cd12151">
    <property type="entry name" value="F1-ATPase_gamma"/>
    <property type="match status" value="1"/>
</dbReference>
<dbReference type="Gene3D" id="3.40.1380.10">
    <property type="match status" value="1"/>
</dbReference>
<dbReference type="Gene3D" id="1.10.287.80">
    <property type="entry name" value="ATP synthase, gamma subunit, helix hairpin domain"/>
    <property type="match status" value="1"/>
</dbReference>
<dbReference type="HAMAP" id="MF_00815">
    <property type="entry name" value="ATP_synth_gamma_bact"/>
    <property type="match status" value="1"/>
</dbReference>
<dbReference type="InterPro" id="IPR035968">
    <property type="entry name" value="ATP_synth_F1_ATPase_gsu"/>
</dbReference>
<dbReference type="InterPro" id="IPR000131">
    <property type="entry name" value="ATP_synth_F1_gsu"/>
</dbReference>
<dbReference type="InterPro" id="IPR023632">
    <property type="entry name" value="ATP_synth_F1_gsu_CS"/>
</dbReference>
<dbReference type="NCBIfam" id="TIGR01146">
    <property type="entry name" value="ATPsyn_F1gamma"/>
    <property type="match status" value="1"/>
</dbReference>
<dbReference type="NCBIfam" id="NF009958">
    <property type="entry name" value="PRK13425.1"/>
    <property type="match status" value="1"/>
</dbReference>
<dbReference type="PANTHER" id="PTHR11693">
    <property type="entry name" value="ATP SYNTHASE GAMMA CHAIN"/>
    <property type="match status" value="1"/>
</dbReference>
<dbReference type="PANTHER" id="PTHR11693:SF22">
    <property type="entry name" value="ATP SYNTHASE SUBUNIT GAMMA, MITOCHONDRIAL"/>
    <property type="match status" value="1"/>
</dbReference>
<dbReference type="Pfam" id="PF00231">
    <property type="entry name" value="ATP-synt"/>
    <property type="match status" value="1"/>
</dbReference>
<dbReference type="PRINTS" id="PR00126">
    <property type="entry name" value="ATPASEGAMMA"/>
</dbReference>
<dbReference type="SUPFAM" id="SSF52943">
    <property type="entry name" value="ATP synthase (F1-ATPase), gamma subunit"/>
    <property type="match status" value="1"/>
</dbReference>
<dbReference type="PROSITE" id="PS00153">
    <property type="entry name" value="ATPASE_GAMMA"/>
    <property type="match status" value="1"/>
</dbReference>
<protein>
    <recommendedName>
        <fullName evidence="1">ATP synthase gamma chain</fullName>
    </recommendedName>
    <alternativeName>
        <fullName evidence="1">ATP synthase F1 sector gamma subunit</fullName>
    </alternativeName>
    <alternativeName>
        <fullName evidence="1">F-ATPase gamma subunit</fullName>
    </alternativeName>
</protein>
<gene>
    <name evidence="1" type="primary">atpG</name>
    <name type="ordered locus">Cpha266_2543</name>
</gene>
<feature type="chain" id="PRO_1000053187" description="ATP synthase gamma chain">
    <location>
        <begin position="1"/>
        <end position="291"/>
    </location>
</feature>
<name>ATPG_CHLPD</name>
<evidence type="ECO:0000255" key="1">
    <source>
        <dbReference type="HAMAP-Rule" id="MF_00815"/>
    </source>
</evidence>
<reference key="1">
    <citation type="submission" date="2006-12" db="EMBL/GenBank/DDBJ databases">
        <title>Complete sequence of Chlorobium phaeobacteroides DSM 266.</title>
        <authorList>
            <consortium name="US DOE Joint Genome Institute"/>
            <person name="Copeland A."/>
            <person name="Lucas S."/>
            <person name="Lapidus A."/>
            <person name="Barry K."/>
            <person name="Detter J.C."/>
            <person name="Glavina del Rio T."/>
            <person name="Hammon N."/>
            <person name="Israni S."/>
            <person name="Pitluck S."/>
            <person name="Goltsman E."/>
            <person name="Schmutz J."/>
            <person name="Larimer F."/>
            <person name="Land M."/>
            <person name="Hauser L."/>
            <person name="Mikhailova N."/>
            <person name="Li T."/>
            <person name="Overmann J."/>
            <person name="Bryant D.A."/>
            <person name="Richardson P."/>
        </authorList>
    </citation>
    <scope>NUCLEOTIDE SEQUENCE [LARGE SCALE GENOMIC DNA]</scope>
    <source>
        <strain>DSM 266 / SMG 266 / 2430</strain>
    </source>
</reference>